<dbReference type="EC" id="2.5.1.120" evidence="1"/>
<dbReference type="EMBL" id="AL939120">
    <property type="protein sequence ID" value="CAD55486.1"/>
    <property type="molecule type" value="Genomic_DNA"/>
</dbReference>
<dbReference type="RefSeq" id="NP_733640.1">
    <property type="nucleotide sequence ID" value="NC_003888.3"/>
</dbReference>
<dbReference type="RefSeq" id="WP_003974455.1">
    <property type="nucleotide sequence ID" value="NZ_VNID01000017.1"/>
</dbReference>
<dbReference type="SMR" id="Q8CJT5"/>
<dbReference type="STRING" id="100226.gene:17762139"/>
<dbReference type="PaxDb" id="100226-SCO4494"/>
<dbReference type="GeneID" id="97194942"/>
<dbReference type="KEGG" id="sco:SCO4494"/>
<dbReference type="PATRIC" id="fig|100226.15.peg.4564"/>
<dbReference type="eggNOG" id="COG1060">
    <property type="taxonomic scope" value="Bacteria"/>
</dbReference>
<dbReference type="HOGENOM" id="CLU_040406_0_0_11"/>
<dbReference type="InParanoid" id="Q8CJT5"/>
<dbReference type="OrthoDB" id="9802027at2"/>
<dbReference type="PhylomeDB" id="Q8CJT5"/>
<dbReference type="UniPathway" id="UPA00079"/>
<dbReference type="Proteomes" id="UP000001973">
    <property type="component" value="Chromosome"/>
</dbReference>
<dbReference type="GO" id="GO:0051539">
    <property type="term" value="F:4 iron, 4 sulfur cluster binding"/>
    <property type="evidence" value="ECO:0007669"/>
    <property type="project" value="UniProtKB-KW"/>
</dbReference>
<dbReference type="GO" id="GO:0044689">
    <property type="term" value="F:7,8-didemethyl-8-hydroxy-5-deazariboflavin synthase activity"/>
    <property type="evidence" value="ECO:0000318"/>
    <property type="project" value="GO_Central"/>
</dbReference>
<dbReference type="GO" id="GO:0102573">
    <property type="term" value="F:aminodeoxyfutalosine synthase activity"/>
    <property type="evidence" value="ECO:0007669"/>
    <property type="project" value="UniProtKB-EC"/>
</dbReference>
<dbReference type="GO" id="GO:0005506">
    <property type="term" value="F:iron ion binding"/>
    <property type="evidence" value="ECO:0007669"/>
    <property type="project" value="UniProtKB-UniRule"/>
</dbReference>
<dbReference type="GO" id="GO:0009234">
    <property type="term" value="P:menaquinone biosynthetic process"/>
    <property type="evidence" value="ECO:0007669"/>
    <property type="project" value="UniProtKB-UniRule"/>
</dbReference>
<dbReference type="CDD" id="cd01335">
    <property type="entry name" value="Radical_SAM"/>
    <property type="match status" value="1"/>
</dbReference>
<dbReference type="Gene3D" id="3.20.20.70">
    <property type="entry name" value="Aldolase class I"/>
    <property type="match status" value="1"/>
</dbReference>
<dbReference type="HAMAP" id="MF_00993">
    <property type="entry name" value="MqnE"/>
    <property type="match status" value="1"/>
</dbReference>
<dbReference type="InterPro" id="IPR013785">
    <property type="entry name" value="Aldolase_TIM"/>
</dbReference>
<dbReference type="InterPro" id="IPR045567">
    <property type="entry name" value="CofH/MnqC-like_C"/>
</dbReference>
<dbReference type="InterPro" id="IPR006638">
    <property type="entry name" value="Elp3/MiaA/NifB-like_rSAM"/>
</dbReference>
<dbReference type="InterPro" id="IPR034405">
    <property type="entry name" value="F420"/>
</dbReference>
<dbReference type="InterPro" id="IPR020050">
    <property type="entry name" value="FO_synthase_su2"/>
</dbReference>
<dbReference type="InterPro" id="IPR022432">
    <property type="entry name" value="MqnE"/>
</dbReference>
<dbReference type="InterPro" id="IPR007197">
    <property type="entry name" value="rSAM"/>
</dbReference>
<dbReference type="NCBIfam" id="TIGR00423">
    <property type="entry name" value="CofH family radical SAM protein"/>
    <property type="match status" value="1"/>
</dbReference>
<dbReference type="NCBIfam" id="TIGR03700">
    <property type="entry name" value="mena_SCO4494"/>
    <property type="match status" value="1"/>
</dbReference>
<dbReference type="PANTHER" id="PTHR43076:SF7">
    <property type="entry name" value="AMINODEOXYFUTALOSINE SYNTHASE"/>
    <property type="match status" value="1"/>
</dbReference>
<dbReference type="PANTHER" id="PTHR43076">
    <property type="entry name" value="FO SYNTHASE (COFH)"/>
    <property type="match status" value="1"/>
</dbReference>
<dbReference type="Pfam" id="PF19288">
    <property type="entry name" value="CofH_C"/>
    <property type="match status" value="1"/>
</dbReference>
<dbReference type="Pfam" id="PF04055">
    <property type="entry name" value="Radical_SAM"/>
    <property type="match status" value="1"/>
</dbReference>
<dbReference type="PIRSF" id="PIRSF004762">
    <property type="entry name" value="CHP00423"/>
    <property type="match status" value="1"/>
</dbReference>
<dbReference type="SFLD" id="SFLDF00343">
    <property type="entry name" value="aminofutalosine_synthase_(mqnE"/>
    <property type="match status" value="1"/>
</dbReference>
<dbReference type="SFLD" id="SFLDG01389">
    <property type="entry name" value="menaquinone_synthsis_involved"/>
    <property type="match status" value="1"/>
</dbReference>
<dbReference type="SMART" id="SM00729">
    <property type="entry name" value="Elp3"/>
    <property type="match status" value="1"/>
</dbReference>
<dbReference type="SUPFAM" id="SSF102114">
    <property type="entry name" value="Radical SAM enzymes"/>
    <property type="match status" value="1"/>
</dbReference>
<dbReference type="PROSITE" id="PS51918">
    <property type="entry name" value="RADICAL_SAM"/>
    <property type="match status" value="1"/>
</dbReference>
<gene>
    <name evidence="1" type="primary">mqnE</name>
    <name type="ordered locus">SCO4494</name>
</gene>
<proteinExistence type="inferred from homology"/>
<sequence>MDAGLKRELEQKVRSGERLTREDGIALYESDDLAWLGGLAHEVRTRKNGDVVHFNVNRHLNMTNVCTASCAYCSFQRKPGEKDAYTMRIEEAVKLAKAMEGENLTELHIVNGLHPNLPWRYYPRSLRELKAALPEVSLKAFTATEIHHFETISGMSASDILDELIDAGLESLTGGGAEIFDWEVRQHIVDHRTHWEDWSRIHRLAHEKGLKTPCTMLYGHIEEPRHRVDHVLRLRELQDETGGFQVFIPLRYQHDFVDMKDGKVRNRLQARTQMATGAEALKTFAVSRLLFDNVPHVKVFWVMHGVQTAQLALQHGADDMDGSVVEYKITHDADDFGTPNKLTREDLLDLIRDAGFRPVERNTRYEILREYEGPDPARRESPQPMRV</sequence>
<name>MQNE_STRCO</name>
<feature type="chain" id="PRO_0000425130" description="Aminodeoxyfutalosine synthase">
    <location>
        <begin position="1"/>
        <end position="387"/>
    </location>
</feature>
<feature type="domain" description="Radical SAM core" evidence="2">
    <location>
        <begin position="52"/>
        <end position="279"/>
    </location>
</feature>
<feature type="binding site" evidence="1">
    <location>
        <position position="66"/>
    </location>
    <ligand>
        <name>[4Fe-4S] cluster</name>
        <dbReference type="ChEBI" id="CHEBI:49883"/>
        <note>4Fe-4S-S-AdoMet</note>
    </ligand>
</feature>
<feature type="binding site" evidence="1">
    <location>
        <position position="70"/>
    </location>
    <ligand>
        <name>[4Fe-4S] cluster</name>
        <dbReference type="ChEBI" id="CHEBI:49883"/>
        <note>4Fe-4S-S-AdoMet</note>
    </ligand>
</feature>
<feature type="binding site" evidence="1">
    <location>
        <position position="73"/>
    </location>
    <ligand>
        <name>[4Fe-4S] cluster</name>
        <dbReference type="ChEBI" id="CHEBI:49883"/>
        <note>4Fe-4S-S-AdoMet</note>
    </ligand>
</feature>
<comment type="function">
    <text evidence="1">Radical SAM enzyme that catalyzes the addition of the adenosyl radical to the double bond of 3-[(1-carboxyvinyl)oxy]benzoate, leading to aminodeoxyfutalosine (AFL), a key intermediate in the formation of menaquinone (MK, vitamin K2) from chorismate.</text>
</comment>
<comment type="catalytic activity">
    <reaction evidence="1">
        <text>3-[(1-carboxyvinyl)-oxy]benzoate + S-adenosyl-L-methionine + H2O = 6-amino-6-deoxyfutalosine + hydrogencarbonate + L-methionine + H(+)</text>
        <dbReference type="Rhea" id="RHEA:33075"/>
        <dbReference type="ChEBI" id="CHEBI:15377"/>
        <dbReference type="ChEBI" id="CHEBI:15378"/>
        <dbReference type="ChEBI" id="CHEBI:17544"/>
        <dbReference type="ChEBI" id="CHEBI:57844"/>
        <dbReference type="ChEBI" id="CHEBI:59789"/>
        <dbReference type="ChEBI" id="CHEBI:64286"/>
        <dbReference type="ChEBI" id="CHEBI:76981"/>
        <dbReference type="EC" id="2.5.1.120"/>
    </reaction>
</comment>
<comment type="cofactor">
    <cofactor evidence="1">
        <name>[4Fe-4S] cluster</name>
        <dbReference type="ChEBI" id="CHEBI:49883"/>
    </cofactor>
    <text evidence="1">Binds 1 [4Fe-4S] cluster. The cluster is coordinated with 3 cysteines and an exchangeable S-adenosyl-L-methionine.</text>
</comment>
<comment type="pathway">
    <text evidence="1">Quinol/quinone metabolism; menaquinone biosynthesis.</text>
</comment>
<comment type="similarity">
    <text evidence="1">Belongs to the radical SAM superfamily. MqnE family.</text>
</comment>
<keyword id="KW-0004">4Fe-4S</keyword>
<keyword id="KW-0408">Iron</keyword>
<keyword id="KW-0411">Iron-sulfur</keyword>
<keyword id="KW-0474">Menaquinone biosynthesis</keyword>
<keyword id="KW-0479">Metal-binding</keyword>
<keyword id="KW-1185">Reference proteome</keyword>
<keyword id="KW-0949">S-adenosyl-L-methionine</keyword>
<keyword id="KW-0808">Transferase</keyword>
<protein>
    <recommendedName>
        <fullName evidence="1">Aminodeoxyfutalosine synthase</fullName>
        <shortName evidence="1">AFL synthase</shortName>
        <shortName evidence="1">Aminofutalosine synthase</shortName>
        <ecNumber evidence="1">2.5.1.120</ecNumber>
    </recommendedName>
    <alternativeName>
        <fullName evidence="1">Menaquinone biosynthetic enzyme MqnE</fullName>
    </alternativeName>
</protein>
<accession>Q8CJT5</accession>
<reference key="1">
    <citation type="journal article" date="2002" name="Nature">
        <title>Complete genome sequence of the model actinomycete Streptomyces coelicolor A3(2).</title>
        <authorList>
            <person name="Bentley S.D."/>
            <person name="Chater K.F."/>
            <person name="Cerdeno-Tarraga A.-M."/>
            <person name="Challis G.L."/>
            <person name="Thomson N.R."/>
            <person name="James K.D."/>
            <person name="Harris D.E."/>
            <person name="Quail M.A."/>
            <person name="Kieser H."/>
            <person name="Harper D."/>
            <person name="Bateman A."/>
            <person name="Brown S."/>
            <person name="Chandra G."/>
            <person name="Chen C.W."/>
            <person name="Collins M."/>
            <person name="Cronin A."/>
            <person name="Fraser A."/>
            <person name="Goble A."/>
            <person name="Hidalgo J."/>
            <person name="Hornsby T."/>
            <person name="Howarth S."/>
            <person name="Huang C.-H."/>
            <person name="Kieser T."/>
            <person name="Larke L."/>
            <person name="Murphy L.D."/>
            <person name="Oliver K."/>
            <person name="O'Neil S."/>
            <person name="Rabbinowitsch E."/>
            <person name="Rajandream M.A."/>
            <person name="Rutherford K.M."/>
            <person name="Rutter S."/>
            <person name="Seeger K."/>
            <person name="Saunders D."/>
            <person name="Sharp S."/>
            <person name="Squares R."/>
            <person name="Squares S."/>
            <person name="Taylor K."/>
            <person name="Warren T."/>
            <person name="Wietzorrek A."/>
            <person name="Woodward J.R."/>
            <person name="Barrell B.G."/>
            <person name="Parkhill J."/>
            <person name="Hopwood D.A."/>
        </authorList>
    </citation>
    <scope>NUCLEOTIDE SEQUENCE [LARGE SCALE GENOMIC DNA]</scope>
    <source>
        <strain>ATCC BAA-471 / A3(2) / M145</strain>
    </source>
</reference>
<organism>
    <name type="scientific">Streptomyces coelicolor (strain ATCC BAA-471 / A3(2) / M145)</name>
    <dbReference type="NCBI Taxonomy" id="100226"/>
    <lineage>
        <taxon>Bacteria</taxon>
        <taxon>Bacillati</taxon>
        <taxon>Actinomycetota</taxon>
        <taxon>Actinomycetes</taxon>
        <taxon>Kitasatosporales</taxon>
        <taxon>Streptomycetaceae</taxon>
        <taxon>Streptomyces</taxon>
        <taxon>Streptomyces albidoflavus group</taxon>
    </lineage>
</organism>
<evidence type="ECO:0000255" key="1">
    <source>
        <dbReference type="HAMAP-Rule" id="MF_00993"/>
    </source>
</evidence>
<evidence type="ECO:0000255" key="2">
    <source>
        <dbReference type="PROSITE-ProRule" id="PRU01266"/>
    </source>
</evidence>